<proteinExistence type="inferred from homology"/>
<comment type="function">
    <text evidence="1">Channel that opens in response to stretch forces in the membrane lipid bilayer. May participate in the regulation of osmotic pressure changes within the cell.</text>
</comment>
<comment type="subunit">
    <text evidence="1">Homopentamer.</text>
</comment>
<comment type="subcellular location">
    <subcellularLocation>
        <location evidence="1">Cell membrane</location>
        <topology evidence="1">Multi-pass membrane protein</topology>
    </subcellularLocation>
</comment>
<comment type="similarity">
    <text evidence="1">Belongs to the MscL family.</text>
</comment>
<evidence type="ECO:0000255" key="1">
    <source>
        <dbReference type="HAMAP-Rule" id="MF_00115"/>
    </source>
</evidence>
<gene>
    <name evidence="1" type="primary">mscL</name>
    <name type="ordered locus">BCE33L4421</name>
</gene>
<keyword id="KW-1003">Cell membrane</keyword>
<keyword id="KW-0407">Ion channel</keyword>
<keyword id="KW-0406">Ion transport</keyword>
<keyword id="KW-0472">Membrane</keyword>
<keyword id="KW-0812">Transmembrane</keyword>
<keyword id="KW-1133">Transmembrane helix</keyword>
<keyword id="KW-0813">Transport</keyword>
<sequence>MWNEFKKFAFKGNVIDLAVGVVIGAAFGKIVSSLVKDIITPLLGMVLGGVDFTDLKITFGKSSIMYGNFIQTIFDFLIIAAAIFMFVKVFNKLTSKREEEKEEEIPEPTKEEELLGEIRDLLKQQNSSKDRA</sequence>
<organism>
    <name type="scientific">Bacillus cereus (strain ZK / E33L)</name>
    <dbReference type="NCBI Taxonomy" id="288681"/>
    <lineage>
        <taxon>Bacteria</taxon>
        <taxon>Bacillati</taxon>
        <taxon>Bacillota</taxon>
        <taxon>Bacilli</taxon>
        <taxon>Bacillales</taxon>
        <taxon>Bacillaceae</taxon>
        <taxon>Bacillus</taxon>
        <taxon>Bacillus cereus group</taxon>
    </lineage>
</organism>
<feature type="chain" id="PRO_0000237972" description="Large-conductance mechanosensitive channel">
    <location>
        <begin position="1"/>
        <end position="132"/>
    </location>
</feature>
<feature type="transmembrane region" description="Helical" evidence="1">
    <location>
        <begin position="14"/>
        <end position="34"/>
    </location>
</feature>
<feature type="transmembrane region" description="Helical" evidence="1">
    <location>
        <begin position="67"/>
        <end position="87"/>
    </location>
</feature>
<accession>Q633B8</accession>
<reference key="1">
    <citation type="journal article" date="2006" name="J. Bacteriol.">
        <title>Pathogenomic sequence analysis of Bacillus cereus and Bacillus thuringiensis isolates closely related to Bacillus anthracis.</title>
        <authorList>
            <person name="Han C.S."/>
            <person name="Xie G."/>
            <person name="Challacombe J.F."/>
            <person name="Altherr M.R."/>
            <person name="Bhotika S.S."/>
            <person name="Bruce D."/>
            <person name="Campbell C.S."/>
            <person name="Campbell M.L."/>
            <person name="Chen J."/>
            <person name="Chertkov O."/>
            <person name="Cleland C."/>
            <person name="Dimitrijevic M."/>
            <person name="Doggett N.A."/>
            <person name="Fawcett J.J."/>
            <person name="Glavina T."/>
            <person name="Goodwin L.A."/>
            <person name="Hill K.K."/>
            <person name="Hitchcock P."/>
            <person name="Jackson P.J."/>
            <person name="Keim P."/>
            <person name="Kewalramani A.R."/>
            <person name="Longmire J."/>
            <person name="Lucas S."/>
            <person name="Malfatti S."/>
            <person name="McMurry K."/>
            <person name="Meincke L.J."/>
            <person name="Misra M."/>
            <person name="Moseman B.L."/>
            <person name="Mundt M."/>
            <person name="Munk A.C."/>
            <person name="Okinaka R.T."/>
            <person name="Parson-Quintana B."/>
            <person name="Reilly L.P."/>
            <person name="Richardson P."/>
            <person name="Robinson D.L."/>
            <person name="Rubin E."/>
            <person name="Saunders E."/>
            <person name="Tapia R."/>
            <person name="Tesmer J.G."/>
            <person name="Thayer N."/>
            <person name="Thompson L.S."/>
            <person name="Tice H."/>
            <person name="Ticknor L.O."/>
            <person name="Wills P.L."/>
            <person name="Brettin T.S."/>
            <person name="Gilna P."/>
        </authorList>
    </citation>
    <scope>NUCLEOTIDE SEQUENCE [LARGE SCALE GENOMIC DNA]</scope>
    <source>
        <strain>ZK / E33L</strain>
    </source>
</reference>
<name>MSCL_BACCZ</name>
<protein>
    <recommendedName>
        <fullName evidence="1">Large-conductance mechanosensitive channel</fullName>
    </recommendedName>
</protein>
<dbReference type="EMBL" id="CP000001">
    <property type="protein sequence ID" value="AAU15849.1"/>
    <property type="molecule type" value="Genomic_DNA"/>
</dbReference>
<dbReference type="RefSeq" id="WP_000267001.1">
    <property type="nucleotide sequence ID" value="NZ_CP009968.1"/>
</dbReference>
<dbReference type="SMR" id="Q633B8"/>
<dbReference type="GeneID" id="45024544"/>
<dbReference type="KEGG" id="bcz:BCE33L4421"/>
<dbReference type="PATRIC" id="fig|288681.22.peg.948"/>
<dbReference type="Proteomes" id="UP000002612">
    <property type="component" value="Chromosome"/>
</dbReference>
<dbReference type="GO" id="GO:0005886">
    <property type="term" value="C:plasma membrane"/>
    <property type="evidence" value="ECO:0007669"/>
    <property type="project" value="UniProtKB-SubCell"/>
</dbReference>
<dbReference type="GO" id="GO:0008381">
    <property type="term" value="F:mechanosensitive monoatomic ion channel activity"/>
    <property type="evidence" value="ECO:0007669"/>
    <property type="project" value="UniProtKB-UniRule"/>
</dbReference>
<dbReference type="FunFam" id="1.10.1200.120:FF:000001">
    <property type="entry name" value="Large-conductance mechanosensitive channel"/>
    <property type="match status" value="1"/>
</dbReference>
<dbReference type="Gene3D" id="1.10.1200.120">
    <property type="entry name" value="Large-conductance mechanosensitive channel, MscL, domain 1"/>
    <property type="match status" value="1"/>
</dbReference>
<dbReference type="HAMAP" id="MF_00115">
    <property type="entry name" value="MscL"/>
    <property type="match status" value="1"/>
</dbReference>
<dbReference type="InterPro" id="IPR019823">
    <property type="entry name" value="Mechanosensitive_channel_CS"/>
</dbReference>
<dbReference type="InterPro" id="IPR001185">
    <property type="entry name" value="MS_channel"/>
</dbReference>
<dbReference type="InterPro" id="IPR037673">
    <property type="entry name" value="MSC/AndL"/>
</dbReference>
<dbReference type="InterPro" id="IPR036019">
    <property type="entry name" value="MscL_channel"/>
</dbReference>
<dbReference type="NCBIfam" id="TIGR00220">
    <property type="entry name" value="mscL"/>
    <property type="match status" value="1"/>
</dbReference>
<dbReference type="NCBIfam" id="NF001843">
    <property type="entry name" value="PRK00567.1-4"/>
    <property type="match status" value="1"/>
</dbReference>
<dbReference type="NCBIfam" id="NF010560">
    <property type="entry name" value="PRK13955.1"/>
    <property type="match status" value="1"/>
</dbReference>
<dbReference type="PANTHER" id="PTHR30266:SF2">
    <property type="entry name" value="LARGE-CONDUCTANCE MECHANOSENSITIVE CHANNEL"/>
    <property type="match status" value="1"/>
</dbReference>
<dbReference type="PANTHER" id="PTHR30266">
    <property type="entry name" value="MECHANOSENSITIVE CHANNEL MSCL"/>
    <property type="match status" value="1"/>
</dbReference>
<dbReference type="Pfam" id="PF01741">
    <property type="entry name" value="MscL"/>
    <property type="match status" value="1"/>
</dbReference>
<dbReference type="PRINTS" id="PR01264">
    <property type="entry name" value="MECHCHANNEL"/>
</dbReference>
<dbReference type="SUPFAM" id="SSF81330">
    <property type="entry name" value="Gated mechanosensitive channel"/>
    <property type="match status" value="1"/>
</dbReference>
<dbReference type="PROSITE" id="PS01327">
    <property type="entry name" value="MSCL"/>
    <property type="match status" value="1"/>
</dbReference>